<evidence type="ECO:0000250" key="1">
    <source>
        <dbReference type="UniProtKB" id="Q8RWN5"/>
    </source>
</evidence>
<evidence type="ECO:0000255" key="2"/>
<evidence type="ECO:0000255" key="3">
    <source>
        <dbReference type="PROSITE-ProRule" id="PRU00176"/>
    </source>
</evidence>
<evidence type="ECO:0000256" key="4">
    <source>
        <dbReference type="SAM" id="MobiDB-lite"/>
    </source>
</evidence>
<evidence type="ECO:0000269" key="5">
    <source>
    </source>
</evidence>
<evidence type="ECO:0000269" key="6">
    <source>
    </source>
</evidence>
<evidence type="ECO:0000303" key="7">
    <source>
    </source>
</evidence>
<evidence type="ECO:0000312" key="8">
    <source>
        <dbReference type="Araport" id="AT5G54580"/>
    </source>
</evidence>
<evidence type="ECO:0000312" key="9">
    <source>
        <dbReference type="EMBL" id="BAB09337.1"/>
    </source>
</evidence>
<accession>Q9FIU6</accession>
<reference key="1">
    <citation type="journal article" date="1998" name="DNA Res.">
        <title>Structural analysis of Arabidopsis thaliana chromosome 5. VII. Sequence features of the regions of 1,013,767 bp covered by sixteen physically assigned P1 and TAC clones.</title>
        <authorList>
            <person name="Nakamura Y."/>
            <person name="Sato S."/>
            <person name="Asamizu E."/>
            <person name="Kaneko T."/>
            <person name="Kotani H."/>
            <person name="Miyajima N."/>
            <person name="Tabata S."/>
        </authorList>
    </citation>
    <scope>NUCLEOTIDE SEQUENCE [LARGE SCALE GENOMIC DNA]</scope>
    <source>
        <strain>cv. Columbia</strain>
    </source>
</reference>
<reference key="2">
    <citation type="journal article" date="2017" name="Plant J.">
        <title>Araport11: a complete reannotation of the Arabidopsis thaliana reference genome.</title>
        <authorList>
            <person name="Cheng C.Y."/>
            <person name="Krishnakumar V."/>
            <person name="Chan A.P."/>
            <person name="Thibaud-Nissen F."/>
            <person name="Schobel S."/>
            <person name="Town C.D."/>
        </authorList>
    </citation>
    <scope>GENOME REANNOTATION</scope>
    <source>
        <strain>cv. Columbia</strain>
    </source>
</reference>
<reference key="3">
    <citation type="journal article" date="2003" name="Science">
        <title>Empirical analysis of transcriptional activity in the Arabidopsis genome.</title>
        <authorList>
            <person name="Yamada K."/>
            <person name="Lim J."/>
            <person name="Dale J.M."/>
            <person name="Chen H."/>
            <person name="Shinn P."/>
            <person name="Palm C.J."/>
            <person name="Southwick A.M."/>
            <person name="Wu H.C."/>
            <person name="Kim C.J."/>
            <person name="Nguyen M."/>
            <person name="Pham P.K."/>
            <person name="Cheuk R.F."/>
            <person name="Karlin-Newmann G."/>
            <person name="Liu S.X."/>
            <person name="Lam B."/>
            <person name="Sakano H."/>
            <person name="Wu T."/>
            <person name="Yu G."/>
            <person name="Miranda M."/>
            <person name="Quach H.L."/>
            <person name="Tripp M."/>
            <person name="Chang C.H."/>
            <person name="Lee J.M."/>
            <person name="Toriumi M.J."/>
            <person name="Chan M.M."/>
            <person name="Tang C.C."/>
            <person name="Onodera C.S."/>
            <person name="Deng J.M."/>
            <person name="Akiyama K."/>
            <person name="Ansari Y."/>
            <person name="Arakawa T."/>
            <person name="Banh J."/>
            <person name="Banno F."/>
            <person name="Bowser L."/>
            <person name="Brooks S.Y."/>
            <person name="Carninci P."/>
            <person name="Chao Q."/>
            <person name="Choy N."/>
            <person name="Enju A."/>
            <person name="Goldsmith A.D."/>
            <person name="Gurjal M."/>
            <person name="Hansen N.F."/>
            <person name="Hayashizaki Y."/>
            <person name="Johnson-Hopson C."/>
            <person name="Hsuan V.W."/>
            <person name="Iida K."/>
            <person name="Karnes M."/>
            <person name="Khan S."/>
            <person name="Koesema E."/>
            <person name="Ishida J."/>
            <person name="Jiang P.X."/>
            <person name="Jones T."/>
            <person name="Kawai J."/>
            <person name="Kamiya A."/>
            <person name="Meyers C."/>
            <person name="Nakajima M."/>
            <person name="Narusaka M."/>
            <person name="Seki M."/>
            <person name="Sakurai T."/>
            <person name="Satou M."/>
            <person name="Tamse R."/>
            <person name="Vaysberg M."/>
            <person name="Wallender E.K."/>
            <person name="Wong C."/>
            <person name="Yamamura Y."/>
            <person name="Yuan S."/>
            <person name="Shinozaki K."/>
            <person name="Davis R.W."/>
            <person name="Theologis A."/>
            <person name="Ecker J.R."/>
        </authorList>
    </citation>
    <scope>NUCLEOTIDE SEQUENCE [LARGE SCALE MRNA]</scope>
    <source>
        <strain>cv. Columbia</strain>
    </source>
</reference>
<reference key="4">
    <citation type="submission" date="2002-03" db="EMBL/GenBank/DDBJ databases">
        <title>Full-length cDNA from Arabidopsis thaliana.</title>
        <authorList>
            <person name="Brover V.V."/>
            <person name="Troukhan M.E."/>
            <person name="Alexandrov N.A."/>
            <person name="Lu Y.-P."/>
            <person name="Flavell R.B."/>
            <person name="Feldmann K.A."/>
        </authorList>
    </citation>
    <scope>NUCLEOTIDE SEQUENCE [LARGE SCALE MRNA]</scope>
</reference>
<reference key="5">
    <citation type="journal article" date="2015" name="Nucleic Acids Res.">
        <title>Two RNA recognition motif-containing proteins are plant mitochondrial editing factors.</title>
        <authorList>
            <person name="Shi X."/>
            <person name="Hanson M.R."/>
            <person name="Bentolila S."/>
        </authorList>
    </citation>
    <scope>FUNCTION</scope>
    <scope>INTERACTION WITH RBG3/ORRM3</scope>
</reference>
<reference key="6">
    <citation type="journal article" date="2017" name="J. Exp. Bot.">
        <title>ORRM5, an RNA recognition motif-containing protein, has a unique effect on mitochondrial RNA editing.</title>
        <authorList>
            <person name="Shi X."/>
            <person name="Castandet B."/>
            <person name="Germain A."/>
            <person name="Hanson M.R."/>
            <person name="Bentolila S."/>
        </authorList>
    </citation>
    <scope>INTERACTION WITH RBG2/ORRM5</scope>
    <source>
        <strain>cv. Columbia</strain>
    </source>
</reference>
<sequence>MAMAMRLPAISRAVTEVASAPVGLRRLFCSNASRFSFLSPQAESQTPARPQAEPSTNLFVSGLSKRTTSEGLRTAFAQFGEVADAKVVTDRVSGYSKGFGFVRYATLEDSAKGIAGMDGKFLDGWVIFAEYARPREQSQSYQPQNNMSRPPYYGNR</sequence>
<name>ORRM2_ARATH</name>
<proteinExistence type="evidence at protein level"/>
<gene>
    <name evidence="7" type="primary">ORRM2</name>
    <name evidence="8" type="ordered locus">At5g54580</name>
    <name evidence="9" type="ORF">MRB17.8</name>
</gene>
<dbReference type="EMBL" id="AB016879">
    <property type="protein sequence ID" value="BAB09337.1"/>
    <property type="molecule type" value="Genomic_DNA"/>
</dbReference>
<dbReference type="EMBL" id="CP002688">
    <property type="protein sequence ID" value="AED96512.1"/>
    <property type="molecule type" value="Genomic_DNA"/>
</dbReference>
<dbReference type="EMBL" id="AY072101">
    <property type="protein sequence ID" value="AAL59923.1"/>
    <property type="molecule type" value="mRNA"/>
</dbReference>
<dbReference type="EMBL" id="AY096589">
    <property type="protein sequence ID" value="AAM20239.1"/>
    <property type="molecule type" value="mRNA"/>
</dbReference>
<dbReference type="EMBL" id="AY085234">
    <property type="protein sequence ID" value="AAM62467.1"/>
    <property type="molecule type" value="mRNA"/>
</dbReference>
<dbReference type="RefSeq" id="NP_200269.1">
    <property type="nucleotide sequence ID" value="NM_124838.5"/>
</dbReference>
<dbReference type="SMR" id="Q9FIU6"/>
<dbReference type="FunCoup" id="Q9FIU6">
    <property type="interactions" value="690"/>
</dbReference>
<dbReference type="IntAct" id="Q9FIU6">
    <property type="interactions" value="9"/>
</dbReference>
<dbReference type="STRING" id="3702.Q9FIU6"/>
<dbReference type="PaxDb" id="3702-AT5G54580.1"/>
<dbReference type="ProteomicsDB" id="248907"/>
<dbReference type="EnsemblPlants" id="AT5G54580.1">
    <property type="protein sequence ID" value="AT5G54580.1"/>
    <property type="gene ID" value="AT5G54580"/>
</dbReference>
<dbReference type="GeneID" id="835546"/>
<dbReference type="Gramene" id="AT5G54580.1">
    <property type="protein sequence ID" value="AT5G54580.1"/>
    <property type="gene ID" value="AT5G54580"/>
</dbReference>
<dbReference type="KEGG" id="ath:AT5G54580"/>
<dbReference type="Araport" id="AT5G54580"/>
<dbReference type="TAIR" id="AT5G54580">
    <property type="gene designation" value="ORRM2"/>
</dbReference>
<dbReference type="eggNOG" id="KOG0118">
    <property type="taxonomic scope" value="Eukaryota"/>
</dbReference>
<dbReference type="HOGENOM" id="CLU_012062_28_4_1"/>
<dbReference type="InParanoid" id="Q9FIU6"/>
<dbReference type="OMA" id="YARPREQ"/>
<dbReference type="OrthoDB" id="439808at2759"/>
<dbReference type="PhylomeDB" id="Q9FIU6"/>
<dbReference type="PRO" id="PR:Q9FIU6"/>
<dbReference type="Proteomes" id="UP000006548">
    <property type="component" value="Chromosome 5"/>
</dbReference>
<dbReference type="ExpressionAtlas" id="Q9FIU6">
    <property type="expression patterns" value="baseline and differential"/>
</dbReference>
<dbReference type="GO" id="GO:0005739">
    <property type="term" value="C:mitochondrion"/>
    <property type="evidence" value="ECO:0007005"/>
    <property type="project" value="TAIR"/>
</dbReference>
<dbReference type="GO" id="GO:0003729">
    <property type="term" value="F:mRNA binding"/>
    <property type="evidence" value="ECO:0000314"/>
    <property type="project" value="TAIR"/>
</dbReference>
<dbReference type="GO" id="GO:0080156">
    <property type="term" value="P:mitochondrial mRNA modification"/>
    <property type="evidence" value="ECO:0000315"/>
    <property type="project" value="TAIR"/>
</dbReference>
<dbReference type="GO" id="GO:0006397">
    <property type="term" value="P:mRNA processing"/>
    <property type="evidence" value="ECO:0007669"/>
    <property type="project" value="UniProtKB-KW"/>
</dbReference>
<dbReference type="FunFam" id="3.30.70.330:FF:000417">
    <property type="entry name" value="RNA recognition motif-containing protein"/>
    <property type="match status" value="1"/>
</dbReference>
<dbReference type="Gene3D" id="3.30.70.330">
    <property type="match status" value="1"/>
</dbReference>
<dbReference type="InterPro" id="IPR012677">
    <property type="entry name" value="Nucleotide-bd_a/b_plait_sf"/>
</dbReference>
<dbReference type="InterPro" id="IPR035979">
    <property type="entry name" value="RBD_domain_sf"/>
</dbReference>
<dbReference type="InterPro" id="IPR000504">
    <property type="entry name" value="RRM_dom"/>
</dbReference>
<dbReference type="PANTHER" id="PTHR48029">
    <property type="entry name" value="NUCLEOLAR PROTEIN 8"/>
    <property type="match status" value="1"/>
</dbReference>
<dbReference type="PANTHER" id="PTHR48029:SF1">
    <property type="entry name" value="NUCLEOLAR PROTEIN 8"/>
    <property type="match status" value="1"/>
</dbReference>
<dbReference type="Pfam" id="PF00076">
    <property type="entry name" value="RRM_1"/>
    <property type="match status" value="1"/>
</dbReference>
<dbReference type="SMART" id="SM00360">
    <property type="entry name" value="RRM"/>
    <property type="match status" value="1"/>
</dbReference>
<dbReference type="SUPFAM" id="SSF54928">
    <property type="entry name" value="RNA-binding domain, RBD"/>
    <property type="match status" value="1"/>
</dbReference>
<dbReference type="PROSITE" id="PS50102">
    <property type="entry name" value="RRM"/>
    <property type="match status" value="1"/>
</dbReference>
<protein>
    <recommendedName>
        <fullName evidence="7">Organelle RRM domain-containing protein 2, mitochondrial</fullName>
    </recommendedName>
</protein>
<organism>
    <name type="scientific">Arabidopsis thaliana</name>
    <name type="common">Mouse-ear cress</name>
    <dbReference type="NCBI Taxonomy" id="3702"/>
    <lineage>
        <taxon>Eukaryota</taxon>
        <taxon>Viridiplantae</taxon>
        <taxon>Streptophyta</taxon>
        <taxon>Embryophyta</taxon>
        <taxon>Tracheophyta</taxon>
        <taxon>Spermatophyta</taxon>
        <taxon>Magnoliopsida</taxon>
        <taxon>eudicotyledons</taxon>
        <taxon>Gunneridae</taxon>
        <taxon>Pentapetalae</taxon>
        <taxon>rosids</taxon>
        <taxon>malvids</taxon>
        <taxon>Brassicales</taxon>
        <taxon>Brassicaceae</taxon>
        <taxon>Camelineae</taxon>
        <taxon>Arabidopsis</taxon>
    </lineage>
</organism>
<comment type="function">
    <text evidence="5">Involved in C-to-U editing of mitochondrial RNA. Functions as minor mitochondrial editing factor. Controls 6 percent of the mitochondrial editing sites.</text>
</comment>
<comment type="subunit">
    <text evidence="5 6">Interacts with RBG3/ORRM3 (PubMed:25800738). Binds to RBG2/ORRM5 (PubMed:28549172).</text>
</comment>
<comment type="interaction">
    <interactant intactId="EBI-4449084">
        <id>Q9FIU6</id>
    </interactant>
    <interactant intactId="EBI-927172">
        <id>O81127</id>
        <label>RSZ21</label>
    </interactant>
    <organismsDiffer>false</organismsDiffer>
    <experiments>3</experiments>
</comment>
<comment type="subcellular location">
    <subcellularLocation>
        <location evidence="2">Mitochondrion</location>
    </subcellularLocation>
</comment>
<feature type="transit peptide" description="Mitochondrion" evidence="2">
    <location>
        <begin position="1"/>
        <end position="28"/>
    </location>
</feature>
<feature type="chain" id="PRO_0000439869" description="Organelle RRM domain-containing protein 2, mitochondrial">
    <location>
        <begin position="29"/>
        <end position="156"/>
    </location>
</feature>
<feature type="domain" description="RRM" evidence="3">
    <location>
        <begin position="56"/>
        <end position="134"/>
    </location>
</feature>
<feature type="region of interest" description="Disordered" evidence="4">
    <location>
        <begin position="137"/>
        <end position="156"/>
    </location>
</feature>
<feature type="compositionally biased region" description="Polar residues" evidence="4">
    <location>
        <begin position="137"/>
        <end position="148"/>
    </location>
</feature>
<feature type="modified residue" description="Phosphoserine" evidence="1">
    <location>
        <position position="64"/>
    </location>
</feature>
<keyword id="KW-0496">Mitochondrion</keyword>
<keyword id="KW-0507">mRNA processing</keyword>
<keyword id="KW-0597">Phosphoprotein</keyword>
<keyword id="KW-1185">Reference proteome</keyword>
<keyword id="KW-0694">RNA-binding</keyword>
<keyword id="KW-0809">Transit peptide</keyword>